<gene>
    <name evidence="10" type="primary">BTBD8</name>
    <name evidence="7" type="synonym">KIAA1107</name>
</gene>
<sequence length="1792" mass="199030">MARCGEGSAAPMVLLGSAGVCSKGLQRKGPCERRRLKATVSEQLSQDLLRLLREEFHTDVTFSVGCTLFKAHKAVLLARVPDFYFHTIGQTSNSLTNQEPIAVENVEALEFRTFLQIIYSSNRNIKNYEEEILRKKIMEIGISQKQLDISFPKCENSSDCSLQKHEIPEDISDRDDDFISNDNYDLEPASELGEDLLKLYVKPCCPDIDIFVDGKRFKAHRAILSARSSYFAAMLSGCWAESSQEYVTLQGISHVELNVMMHFIYGGTLDIPDKTNVGQILNMADMYGLEGLKEVAIYILRRDYCNFFQKPVPRTLTSILECLIIAHSVGVESLFADCMKWIVKHFARFWSERSFANIPPEIQKSCLNMLIQSLNDKNAAFLLMESDRLIISLPRVKWTEAALTMASQLQEKCIAFIVDNFSKIIQSENFALLLQSQAMSSTADLLDTILKAIEENITTENSCSLLMALDTLLNSDSTKEMGFTCKIQALRDKLWIFLVQSFYAVRHTESWKLMSTDDQQKIQAAAFDKGDDRRLGKKPIFSSSQQRKQVSDSGDIKIKSWRGNNKKECWSYLSTNKKMKSDGLGASGHSSSTNRNSINKTLKQDDVKEKDGTKIASKITKELKTGGKNVSGKPKTVTKSKTENGDKARLENMSPRQVVERSATAAAAATGQKNLLNGKGVRNQEGQISGARPKVLTGNLNVQAKAKPLKKATGKDSPCLSIAGPSSRSTDSSMEFSISTECLDEPKENGSTEEEKPSGHKLSFCDSPGQMMKNSVDSVKNSTVAIKSRPVSRVTNGTSNKKSIHEQDTNVNNSVLKKVSGKGCSEPVPQAILKKRGTSNGCTAAQQRTKSTPSNLTKTQGSQGESPNSVKSSVSSRQSDENVAKLDHNTTTEKQAPKRKMVKQVHTALPKVNAKIVAMPKNLNQSKKGETLNNKDSKQKMPPGQVISKTQPSSQRPLKHETSTVQKSMFHDVRDNNNKDSVSEQKPHKPLINLASEISDAEALQSSCRPDPQKPLNDQEKEKLALECQNISKLDKSLKHELESKQICLDKSETKFPNHKETDDCDAANICCHSVGSDNVNSKFYSTTALKYMVSNPNENSLNSNPVCDLDSTSAGQIHLISDRENQVGRKDTNKQSSIKCVEDVSLCNPERTNGTLNSAQEDKKSKVPVEGLTIPSKLSDESAMDEDKHATADSDVSSKCFSGQLSEKNSPKNMETSESPESHETPETPFVGHWNLSTGVLHQRESPESDTGSATTSSDDIKPRSEDYDAGGSQDDDGSNDRGISKCGTMLCHDFLGRSSSDTSTPEELKIYDSNLRIEVKMKKQSNNDLFQVNSTSDDEIPRKRPEIWSRSAIVHSRERENIPRGSVQFAQEIDQVSSSADETEDERSEAENVAENFSISNPAPQQFQGIINLAFEDATENECREFSATKKFKRSVLLSVDECEELGSDEGEVHTPFQASVDSFSPSDVFDGISHEHHGRTCYSRFSRESEDNILECKQNKGNSVCKNESTVLDLSSIDSSRKNKQSVSATEKKNTIDVLSSRSRQLLREDKKVNNGSNVENDIQQRSKFLDSDVKSQERPCHLDLHQREPNSDIPKNSSTKSLDSFRSQVLPQEGPVKESHSTTTEKANIALSAGDIDDCDTLAQTRMYDHRPSKTLSPIYEMDVIEAFEQKVESETHVTDMDFEDDQHFAKQDWTLLKQLLSEQDSNLDVTNSVPEDLSLAQYLINQTLLLARDSSKPQGITHIDTLNRWSELTSPLDSSASITMASFSSEDCSPQGEWTILELETQH</sequence>
<organism>
    <name type="scientific">Homo sapiens</name>
    <name type="common">Human</name>
    <dbReference type="NCBI Taxonomy" id="9606"/>
    <lineage>
        <taxon>Eukaryota</taxon>
        <taxon>Metazoa</taxon>
        <taxon>Chordata</taxon>
        <taxon>Craniata</taxon>
        <taxon>Vertebrata</taxon>
        <taxon>Euteleostomi</taxon>
        <taxon>Mammalia</taxon>
        <taxon>Eutheria</taxon>
        <taxon>Euarchontoglires</taxon>
        <taxon>Primates</taxon>
        <taxon>Haplorrhini</taxon>
        <taxon>Catarrhini</taxon>
        <taxon>Hominidae</taxon>
        <taxon>Homo</taxon>
    </lineage>
</organism>
<keyword id="KW-0025">Alternative splicing</keyword>
<keyword id="KW-0966">Cell projection</keyword>
<keyword id="KW-0968">Cytoplasmic vesicle</keyword>
<keyword id="KW-0539">Nucleus</keyword>
<keyword id="KW-1267">Proteomics identification</keyword>
<keyword id="KW-1185">Reference proteome</keyword>
<keyword id="KW-0677">Repeat</keyword>
<keyword id="KW-0770">Synapse</keyword>
<evidence type="ECO:0000250" key="1">
    <source>
        <dbReference type="UniProtKB" id="D4A0X3"/>
    </source>
</evidence>
<evidence type="ECO:0000250" key="2">
    <source>
        <dbReference type="UniProtKB" id="Q80TK0"/>
    </source>
</evidence>
<evidence type="ECO:0000255" key="3">
    <source>
        <dbReference type="PROSITE-ProRule" id="PRU00037"/>
    </source>
</evidence>
<evidence type="ECO:0000256" key="4">
    <source>
        <dbReference type="SAM" id="MobiDB-lite"/>
    </source>
</evidence>
<evidence type="ECO:0000269" key="5">
    <source>
    </source>
</evidence>
<evidence type="ECO:0000269" key="6">
    <source>
    </source>
</evidence>
<evidence type="ECO:0000303" key="7">
    <source>
    </source>
</evidence>
<evidence type="ECO:0000303" key="8">
    <source>
    </source>
</evidence>
<evidence type="ECO:0000305" key="9"/>
<evidence type="ECO:0000312" key="10">
    <source>
        <dbReference type="HGNC" id="HGNC:21019"/>
    </source>
</evidence>
<feature type="chain" id="PRO_0000239224" description="BTB/POZ domain-containing protein 8">
    <location>
        <begin position="1"/>
        <end position="1792"/>
    </location>
</feature>
<feature type="domain" description="BTB 1" evidence="3">
    <location>
        <begin position="58"/>
        <end position="127"/>
    </location>
</feature>
<feature type="domain" description="BTB 2" evidence="3">
    <location>
        <begin position="206"/>
        <end position="273"/>
    </location>
</feature>
<feature type="region of interest" description="Disordered" evidence="4">
    <location>
        <begin position="528"/>
        <end position="554"/>
    </location>
</feature>
<feature type="region of interest" description="Disordered" evidence="4">
    <location>
        <begin position="581"/>
        <end position="658"/>
    </location>
</feature>
<feature type="region of interest" description="Disordered" evidence="4">
    <location>
        <begin position="670"/>
        <end position="692"/>
    </location>
</feature>
<feature type="region of interest" description="Disordered" evidence="4">
    <location>
        <begin position="707"/>
        <end position="768"/>
    </location>
</feature>
<feature type="region of interest" description="Disordered" evidence="4">
    <location>
        <begin position="788"/>
        <end position="815"/>
    </location>
</feature>
<feature type="region of interest" description="Disordered" evidence="4">
    <location>
        <begin position="831"/>
        <end position="989"/>
    </location>
</feature>
<feature type="region of interest" description="Disordered" evidence="4">
    <location>
        <begin position="1151"/>
        <end position="1283"/>
    </location>
</feature>
<feature type="region of interest" description="Disordered" evidence="4">
    <location>
        <begin position="1519"/>
        <end position="1607"/>
    </location>
</feature>
<feature type="compositionally biased region" description="Polar residues" evidence="4">
    <location>
        <begin position="541"/>
        <end position="552"/>
    </location>
</feature>
<feature type="compositionally biased region" description="Polar residues" evidence="4">
    <location>
        <begin position="588"/>
        <end position="601"/>
    </location>
</feature>
<feature type="compositionally biased region" description="Basic and acidic residues" evidence="4">
    <location>
        <begin position="602"/>
        <end position="625"/>
    </location>
</feature>
<feature type="compositionally biased region" description="Basic and acidic residues" evidence="4">
    <location>
        <begin position="640"/>
        <end position="650"/>
    </location>
</feature>
<feature type="compositionally biased region" description="Polar residues" evidence="4">
    <location>
        <begin position="724"/>
        <end position="740"/>
    </location>
</feature>
<feature type="compositionally biased region" description="Basic and acidic residues" evidence="4">
    <location>
        <begin position="744"/>
        <end position="758"/>
    </location>
</feature>
<feature type="compositionally biased region" description="Polar residues" evidence="4">
    <location>
        <begin position="838"/>
        <end position="865"/>
    </location>
</feature>
<feature type="compositionally biased region" description="Low complexity" evidence="4">
    <location>
        <begin position="866"/>
        <end position="877"/>
    </location>
</feature>
<feature type="compositionally biased region" description="Basic and acidic residues" evidence="4">
    <location>
        <begin position="878"/>
        <end position="891"/>
    </location>
</feature>
<feature type="compositionally biased region" description="Basic and acidic residues" evidence="4">
    <location>
        <begin position="927"/>
        <end position="939"/>
    </location>
</feature>
<feature type="compositionally biased region" description="Polar residues" evidence="4">
    <location>
        <begin position="947"/>
        <end position="956"/>
    </location>
</feature>
<feature type="compositionally biased region" description="Basic and acidic residues" evidence="4">
    <location>
        <begin position="969"/>
        <end position="987"/>
    </location>
</feature>
<feature type="compositionally biased region" description="Polar residues" evidence="4">
    <location>
        <begin position="1151"/>
        <end position="1160"/>
    </location>
</feature>
<feature type="compositionally biased region" description="Polar residues" evidence="4">
    <location>
        <begin position="1195"/>
        <end position="1215"/>
    </location>
</feature>
<feature type="compositionally biased region" description="Low complexity" evidence="4">
    <location>
        <begin position="1250"/>
        <end position="1259"/>
    </location>
</feature>
<feature type="compositionally biased region" description="Basic and acidic residues" evidence="4">
    <location>
        <begin position="1566"/>
        <end position="1594"/>
    </location>
</feature>
<feature type="compositionally biased region" description="Polar residues" evidence="4">
    <location>
        <begin position="1597"/>
        <end position="1607"/>
    </location>
</feature>
<feature type="splice variant" id="VSP_061629" description="In isoform 4.">
    <original>DIDD</original>
    <variation>NVQK</variation>
    <location>
        <begin position="1639"/>
        <end position="1642"/>
    </location>
</feature>
<feature type="splice variant" id="VSP_061630" description="In isoform 4.">
    <location>
        <begin position="1643"/>
        <end position="1792"/>
    </location>
</feature>
<feature type="sequence variant" id="VAR_048436" description="In dbSNP:rs34856868.">
    <original>V</original>
    <variation>I</variation>
    <location>
        <position position="60"/>
    </location>
</feature>
<feature type="sequence variant" id="VAR_033637" description="In dbSNP:rs17131602.">
    <original>K</original>
    <variation>R</variation>
    <location>
        <position position="136"/>
    </location>
</feature>
<feature type="sequence variant" id="VAR_060300" description="In dbSNP:rs2128647.">
    <original>H</original>
    <variation>R</variation>
    <location>
        <position position="805"/>
    </location>
</feature>
<feature type="sequence variant" id="VAR_060301" description="In dbSNP:rs12084085.">
    <original>S</original>
    <variation>I</variation>
    <location>
        <position position="825"/>
    </location>
</feature>
<feature type="sequence variant" id="VAR_060302" description="In dbSNP:rs7552286.">
    <original>V</original>
    <variation>L</variation>
    <location>
        <position position="905"/>
    </location>
</feature>
<feature type="sequence variant" id="VAR_060303" description="In dbSNP:rs11166332.">
    <original>Q</original>
    <variation>R</variation>
    <location>
        <position position="985"/>
    </location>
</feature>
<feature type="sequence variant" id="VAR_060304" description="In dbSNP:rs7523466.">
    <original>D</original>
    <variation>G</variation>
    <location>
        <position position="1064"/>
    </location>
</feature>
<feature type="sequence variant" id="VAR_060305" description="In dbSNP:rs7523552.">
    <original>N</original>
    <variation>Y</variation>
    <location>
        <position position="1098"/>
    </location>
</feature>
<feature type="sequence variant" id="VAR_060306" description="In dbSNP:rs3738439.">
    <original>K</original>
    <variation>E</variation>
    <location>
        <position position="1209"/>
    </location>
</feature>
<feature type="sequence variant" id="VAR_060307" description="In dbSNP:rs560389.">
    <original>N</original>
    <variation>S</variation>
    <location>
        <position position="1328"/>
    </location>
</feature>
<feature type="sequence variant" id="VAR_060308" description="In dbSNP:rs565156.">
    <original>T</original>
    <variation>N</variation>
    <location>
        <position position="1431"/>
    </location>
</feature>
<feature type="sequence variant" id="VAR_060309" description="In dbSNP:rs17578364.">
    <original>F</original>
    <variation>V</variation>
    <location>
        <position position="1466"/>
    </location>
</feature>
<feature type="sequence variant" id="VAR_060310" description="In dbSNP:rs566576.">
    <original>V</original>
    <variation>I</variation>
    <location>
        <position position="1541"/>
    </location>
</feature>
<feature type="sequence conflict" description="In Ref. 5; AAH37317." evidence="9" ref="5">
    <original>F</original>
    <variation>L</variation>
    <location>
        <position position="1399"/>
    </location>
</feature>
<proteinExistence type="evidence at protein level"/>
<accession>Q5XKL5</accession>
<accession>A0A1B0GUL6</accession>
<accession>A0A1B0GWG1</accession>
<accession>O14767</accession>
<accession>Q6V9S5</accession>
<accession>Q8N3X7</accession>
<accession>Q9UPP5</accession>
<name>BTBD8_HUMAN</name>
<reference key="1">
    <citation type="submission" date="2003-07" db="EMBL/GenBank/DDBJ databases">
        <title>Molecular cloning and characterization of a novel DBTB gene containing a double BTB domain.</title>
        <authorList>
            <person name="He T."/>
            <person name="Xu J."/>
            <person name="Xie Y."/>
            <person name="Mao Y."/>
        </authorList>
    </citation>
    <scope>NUCLEOTIDE SEQUENCE [MRNA]</scope>
</reference>
<reference key="2">
    <citation type="journal article" date="2006" name="Nature">
        <title>The DNA sequence and biological annotation of human chromosome 1.</title>
        <authorList>
            <person name="Gregory S.G."/>
            <person name="Barlow K.F."/>
            <person name="McLay K.E."/>
            <person name="Kaul R."/>
            <person name="Swarbreck D."/>
            <person name="Dunham A."/>
            <person name="Scott C.E."/>
            <person name="Howe K.L."/>
            <person name="Woodfine K."/>
            <person name="Spencer C.C.A."/>
            <person name="Jones M.C."/>
            <person name="Gillson C."/>
            <person name="Searle S."/>
            <person name="Zhou Y."/>
            <person name="Kokocinski F."/>
            <person name="McDonald L."/>
            <person name="Evans R."/>
            <person name="Phillips K."/>
            <person name="Atkinson A."/>
            <person name="Cooper R."/>
            <person name="Jones C."/>
            <person name="Hall R.E."/>
            <person name="Andrews T.D."/>
            <person name="Lloyd C."/>
            <person name="Ainscough R."/>
            <person name="Almeida J.P."/>
            <person name="Ambrose K.D."/>
            <person name="Anderson F."/>
            <person name="Andrew R.W."/>
            <person name="Ashwell R.I.S."/>
            <person name="Aubin K."/>
            <person name="Babbage A.K."/>
            <person name="Bagguley C.L."/>
            <person name="Bailey J."/>
            <person name="Beasley H."/>
            <person name="Bethel G."/>
            <person name="Bird C.P."/>
            <person name="Bray-Allen S."/>
            <person name="Brown J.Y."/>
            <person name="Brown A.J."/>
            <person name="Buckley D."/>
            <person name="Burton J."/>
            <person name="Bye J."/>
            <person name="Carder C."/>
            <person name="Chapman J.C."/>
            <person name="Clark S.Y."/>
            <person name="Clarke G."/>
            <person name="Clee C."/>
            <person name="Cobley V."/>
            <person name="Collier R.E."/>
            <person name="Corby N."/>
            <person name="Coville G.J."/>
            <person name="Davies J."/>
            <person name="Deadman R."/>
            <person name="Dunn M."/>
            <person name="Earthrowl M."/>
            <person name="Ellington A.G."/>
            <person name="Errington H."/>
            <person name="Frankish A."/>
            <person name="Frankland J."/>
            <person name="French L."/>
            <person name="Garner P."/>
            <person name="Garnett J."/>
            <person name="Gay L."/>
            <person name="Ghori M.R.J."/>
            <person name="Gibson R."/>
            <person name="Gilby L.M."/>
            <person name="Gillett W."/>
            <person name="Glithero R.J."/>
            <person name="Grafham D.V."/>
            <person name="Griffiths C."/>
            <person name="Griffiths-Jones S."/>
            <person name="Grocock R."/>
            <person name="Hammond S."/>
            <person name="Harrison E.S.I."/>
            <person name="Hart E."/>
            <person name="Haugen E."/>
            <person name="Heath P.D."/>
            <person name="Holmes S."/>
            <person name="Holt K."/>
            <person name="Howden P.J."/>
            <person name="Hunt A.R."/>
            <person name="Hunt S.E."/>
            <person name="Hunter G."/>
            <person name="Isherwood J."/>
            <person name="James R."/>
            <person name="Johnson C."/>
            <person name="Johnson D."/>
            <person name="Joy A."/>
            <person name="Kay M."/>
            <person name="Kershaw J.K."/>
            <person name="Kibukawa M."/>
            <person name="Kimberley A.M."/>
            <person name="King A."/>
            <person name="Knights A.J."/>
            <person name="Lad H."/>
            <person name="Laird G."/>
            <person name="Lawlor S."/>
            <person name="Leongamornlert D.A."/>
            <person name="Lloyd D.M."/>
            <person name="Loveland J."/>
            <person name="Lovell J."/>
            <person name="Lush M.J."/>
            <person name="Lyne R."/>
            <person name="Martin S."/>
            <person name="Mashreghi-Mohammadi M."/>
            <person name="Matthews L."/>
            <person name="Matthews N.S.W."/>
            <person name="McLaren S."/>
            <person name="Milne S."/>
            <person name="Mistry S."/>
            <person name="Moore M.J.F."/>
            <person name="Nickerson T."/>
            <person name="O'Dell C.N."/>
            <person name="Oliver K."/>
            <person name="Palmeiri A."/>
            <person name="Palmer S.A."/>
            <person name="Parker A."/>
            <person name="Patel D."/>
            <person name="Pearce A.V."/>
            <person name="Peck A.I."/>
            <person name="Pelan S."/>
            <person name="Phelps K."/>
            <person name="Phillimore B.J."/>
            <person name="Plumb R."/>
            <person name="Rajan J."/>
            <person name="Raymond C."/>
            <person name="Rouse G."/>
            <person name="Saenphimmachak C."/>
            <person name="Sehra H.K."/>
            <person name="Sheridan E."/>
            <person name="Shownkeen R."/>
            <person name="Sims S."/>
            <person name="Skuce C.D."/>
            <person name="Smith M."/>
            <person name="Steward C."/>
            <person name="Subramanian S."/>
            <person name="Sycamore N."/>
            <person name="Tracey A."/>
            <person name="Tromans A."/>
            <person name="Van Helmond Z."/>
            <person name="Wall M."/>
            <person name="Wallis J.M."/>
            <person name="White S."/>
            <person name="Whitehead S.L."/>
            <person name="Wilkinson J.E."/>
            <person name="Willey D.L."/>
            <person name="Williams H."/>
            <person name="Wilming L."/>
            <person name="Wray P.W."/>
            <person name="Wu Z."/>
            <person name="Coulson A."/>
            <person name="Vaudin M."/>
            <person name="Sulston J.E."/>
            <person name="Durbin R.M."/>
            <person name="Hubbard T."/>
            <person name="Wooster R."/>
            <person name="Dunham I."/>
            <person name="Carter N.P."/>
            <person name="McVean G."/>
            <person name="Ross M.T."/>
            <person name="Harrow J."/>
            <person name="Olson M.V."/>
            <person name="Beck S."/>
            <person name="Rogers J."/>
            <person name="Bentley D.R."/>
        </authorList>
    </citation>
    <scope>NUCLEOTIDE SEQUENCE [LARGE SCALE GENOMIC DNA]</scope>
</reference>
<reference key="3">
    <citation type="submission" date="1997-08" db="EMBL/GenBank/DDBJ databases">
        <title>Development of subtraction libraries from the brains of individuals with psychiatric diseases.</title>
        <authorList>
            <consortium name="The Stanley neuropathology consortium"/>
            <person name="Yolken R."/>
            <person name="Leister F."/>
            <person name="Li S."/>
            <person name="Johnston N."/>
            <person name="Torrey E.F."/>
        </authorList>
    </citation>
    <scope>NUCLEOTIDE SEQUENCE [MRNA] OF 502-592 (ISOFORM 3)</scope>
    <source>
        <tissue>Frontal cortex</tissue>
    </source>
</reference>
<reference key="4">
    <citation type="journal article" date="1999" name="DNA Res.">
        <title>Prediction of the coding sequences of unidentified human genes. XIV. The complete sequences of 100 new cDNA clones from brain which code for large proteins in vitro.</title>
        <authorList>
            <person name="Kikuno R."/>
            <person name="Nagase T."/>
            <person name="Ishikawa K."/>
            <person name="Hirosawa M."/>
            <person name="Miyajima N."/>
            <person name="Tanaka A."/>
            <person name="Kotani H."/>
            <person name="Nomura N."/>
            <person name="Ohara O."/>
        </authorList>
    </citation>
    <scope>NUCLEOTIDE SEQUENCE [LARGE SCALE MRNA] OF 515-1792 (ISOFORM 3)</scope>
    <scope>VARIANT ASN-1431</scope>
    <source>
        <tissue>Brain</tissue>
    </source>
</reference>
<reference key="5">
    <citation type="journal article" date="2004" name="Genome Res.">
        <title>The status, quality, and expansion of the NIH full-length cDNA project: the Mammalian Gene Collection (MGC).</title>
        <authorList>
            <consortium name="The MGC Project Team"/>
        </authorList>
    </citation>
    <scope>NUCLEOTIDE SEQUENCE [LARGE SCALE MRNA] OF 1349-1792 (ISOFORM 4)</scope>
    <scope>VARIANT ASN-1431</scope>
    <source>
        <tissue>Bone marrow</tissue>
    </source>
</reference>
<reference key="6">
    <citation type="journal article" date="2004" name="Int. J. Mol. Med.">
        <title>Molecular cloning and characterization of a novel human BTBD8 gene containing double BTB/POZ domains.</title>
        <authorList>
            <person name="Xu J."/>
            <person name="He T."/>
            <person name="Wang L."/>
            <person name="Wu Q."/>
            <person name="Zhao E."/>
            <person name="Wu M."/>
            <person name="Dou T."/>
            <person name="Ji C."/>
            <person name="Gu S."/>
            <person name="Yin K."/>
            <person name="Xie Y."/>
            <person name="Mao Y."/>
        </authorList>
    </citation>
    <scope>SUBCELLULAR LOCATION</scope>
    <scope>TISSUE SPECIFICITY</scope>
    <scope>DEVELOPMENTAL STAGE</scope>
</reference>
<reference key="7">
    <citation type="journal article" date="2017" name="Cell Rep.">
        <title>APache is an AP2-interacting protein involved in synaptic vesicle trafficking and neuronal development.</title>
        <authorList>
            <person name="Piccini A."/>
            <person name="Castroflorio E."/>
            <person name="Valente P."/>
            <person name="Guarnieri F.C."/>
            <person name="Aprile D."/>
            <person name="Michetti C."/>
            <person name="Bramini M."/>
            <person name="Giansante G."/>
            <person name="Pinto B."/>
            <person name="Savardi A."/>
            <person name="Cesca F."/>
            <person name="Bachi A."/>
            <person name="Cattaneo A."/>
            <person name="Wren J.D."/>
            <person name="Fassio A."/>
            <person name="Valtorta F."/>
            <person name="Benfenati F."/>
            <person name="Giovedi S."/>
        </authorList>
    </citation>
    <scope>INTERACTION WITH AP2A1 AND AP2B1</scope>
</reference>
<comment type="function">
    <text evidence="2">Involved in clathrin-mediated endocytosis at the synapse. Plays a role in neuronal development and in synaptic vesicle recycling in mature neurons, a process required for normal synaptic transmission.</text>
</comment>
<comment type="subunit">
    <text evidence="6">Interacts (via N-terminus) with adapter protein complex AP-2 subunits alpha (AP2A1) and beta (AP2B1).</text>
</comment>
<comment type="subcellular location">
    <subcellularLocation>
        <location evidence="2">Cell projection</location>
        <location evidence="2">Axon</location>
    </subcellularLocation>
    <subcellularLocation>
        <location evidence="2">Presynapse</location>
    </subcellularLocation>
    <subcellularLocation>
        <location evidence="1">Cytoplasmic vesicle</location>
        <location evidence="1">Clathrin-coated vesicle</location>
    </subcellularLocation>
    <subcellularLocation>
        <location evidence="5">Nucleus</location>
    </subcellularLocation>
    <text evidence="2 5">In primary cultures, mainly present at axonal and presynaptic terminal levels of mature neurons. In immature neurons, localizes to the cell body and growing processes, including axons (By similarity). Localized to nucleus in fetal cells (PubMed:14654994).</text>
</comment>
<comment type="alternative products">
    <event type="alternative splicing"/>
    <isoform>
        <id>Q5XKL5-3</id>
        <name>3</name>
        <sequence type="displayed"/>
    </isoform>
    <isoform>
        <id>Q5XKL5-4</id>
        <name>4</name>
        <sequence type="described" ref="VSP_061629 VSP_061630"/>
    </isoform>
</comment>
<comment type="tissue specificity">
    <text evidence="5">Highly expressed in fetal brain. Weakly expressed in adult brain and prostate.</text>
</comment>
<comment type="developmental stage">
    <text evidence="5">Expressed mainly in fetal tissues.</text>
</comment>
<comment type="miscellaneous">
    <molecule>Isoform 4</molecule>
    <text evidence="9">May be produced at very low levels due to a premature stop codon in the mRNA, leading to nonsense-mediated mRNA decay.</text>
</comment>
<comment type="sequence caution" evidence="9">
    <conflict type="erroneous initiation">
        <sequence resource="EMBL-CDS" id="AAC28132"/>
    </conflict>
    <text>Extended N-terminus.</text>
</comment>
<comment type="sequence caution" evidence="9">
    <conflict type="miscellaneous discrepancy">
        <sequence resource="EMBL-CDS" id="AAH13922"/>
    </conflict>
    <text>Contaminating sequence. Premature poly-A sequence.</text>
</comment>
<comment type="sequence caution" evidence="9">
    <conflict type="miscellaneous discrepancy">
        <sequence resource="EMBL-CDS" id="AAQ24383"/>
    </conflict>
    <text>Probable cloning artifact.</text>
</comment>
<protein>
    <recommendedName>
        <fullName evidence="9">BTB/POZ domain-containing protein 8</fullName>
    </recommendedName>
    <alternativeName>
        <fullName evidence="8">AP2-interacting clathrin-endocytosis</fullName>
        <shortName evidence="8">APache</shortName>
    </alternativeName>
</protein>
<dbReference type="EMBL" id="AY346333">
    <property type="protein sequence ID" value="AAQ24383.1"/>
    <property type="status" value="ALT_SEQ"/>
    <property type="molecule type" value="mRNA"/>
</dbReference>
<dbReference type="EMBL" id="AC104836">
    <property type="status" value="NOT_ANNOTATED_CDS"/>
    <property type="molecule type" value="Genomic_DNA"/>
</dbReference>
<dbReference type="EMBL" id="AF017090">
    <property type="protein sequence ID" value="AAC28132.1"/>
    <property type="status" value="ALT_INIT"/>
    <property type="molecule type" value="mRNA"/>
</dbReference>
<dbReference type="EMBL" id="AB029030">
    <property type="protein sequence ID" value="BAA83059.1"/>
    <property type="molecule type" value="mRNA"/>
</dbReference>
<dbReference type="EMBL" id="BC013922">
    <property type="protein sequence ID" value="AAH13922.1"/>
    <property type="status" value="ALT_SEQ"/>
    <property type="molecule type" value="mRNA"/>
</dbReference>
<dbReference type="EMBL" id="BC037317">
    <property type="protein sequence ID" value="AAH37317.2"/>
    <property type="molecule type" value="mRNA"/>
</dbReference>
<dbReference type="CCDS" id="CCDS91000.1">
    <molecule id="Q5XKL5-3"/>
</dbReference>
<dbReference type="RefSeq" id="NP_001363060.1">
    <molecule id="Q5XKL5-3"/>
    <property type="nucleotide sequence ID" value="NM_001376131.1"/>
</dbReference>
<dbReference type="RefSeq" id="NP_056052.3">
    <property type="nucleotide sequence ID" value="NM_015237.3"/>
</dbReference>
<dbReference type="RefSeq" id="NP_899065.2">
    <property type="nucleotide sequence ID" value="NM_183242.3"/>
</dbReference>
<dbReference type="SMR" id="Q5XKL5"/>
<dbReference type="BioGRID" id="116883">
    <property type="interactions" value="38"/>
</dbReference>
<dbReference type="BioGRID" id="129937">
    <property type="interactions" value="4"/>
</dbReference>
<dbReference type="FunCoup" id="Q5XKL5">
    <property type="interactions" value="618"/>
</dbReference>
<dbReference type="IntAct" id="Q5XKL5">
    <property type="interactions" value="29"/>
</dbReference>
<dbReference type="MINT" id="Q5XKL5"/>
<dbReference type="STRING" id="9606.ENSP00000490913"/>
<dbReference type="iPTMnet" id="Q5XKL5"/>
<dbReference type="PhosphoSitePlus" id="Q5XKL5"/>
<dbReference type="BioMuta" id="BTBD8"/>
<dbReference type="DMDM" id="226693502"/>
<dbReference type="jPOST" id="Q5XKL5"/>
<dbReference type="MassIVE" id="Q5XKL5"/>
<dbReference type="PaxDb" id="9606-ENSP00000359404"/>
<dbReference type="PeptideAtlas" id="Q5XKL5"/>
<dbReference type="ProteomicsDB" id="85400"/>
<dbReference type="ProteomicsDB" id="85401"/>
<dbReference type="Antibodypedia" id="33636">
    <property type="antibodies" value="34 antibodies from 12 providers"/>
</dbReference>
<dbReference type="DNASU" id="284697"/>
<dbReference type="Ensembl" id="ENST00000636805.2">
    <molecule id="Q5XKL5-3"/>
    <property type="protein sequence ID" value="ENSP00000490161.1"/>
    <property type="gene ID" value="ENSG00000189195.15"/>
</dbReference>
<dbReference type="GeneID" id="284697"/>
<dbReference type="KEGG" id="hsa:284697"/>
<dbReference type="MANE-Select" id="ENST00000636805.2">
    <property type="protein sequence ID" value="ENSP00000490161.1"/>
    <property type="RefSeq nucleotide sequence ID" value="NM_001376131.1"/>
    <property type="RefSeq protein sequence ID" value="NP_001363060.1"/>
</dbReference>
<dbReference type="UCSC" id="uc001doo.5">
    <molecule id="Q5XKL5-3"/>
    <property type="organism name" value="human"/>
</dbReference>
<dbReference type="AGR" id="HGNC:21019"/>
<dbReference type="CTD" id="284697"/>
<dbReference type="DisGeNET" id="284697"/>
<dbReference type="GeneCards" id="BTBD8"/>
<dbReference type="HGNC" id="HGNC:21019">
    <property type="gene designation" value="BTBD8"/>
</dbReference>
<dbReference type="HPA" id="ENSG00000189195">
    <property type="expression patterns" value="Group enriched (brain, retina, testis)"/>
</dbReference>
<dbReference type="MIM" id="617945">
    <property type="type" value="gene"/>
</dbReference>
<dbReference type="neXtProt" id="NX_Q5XKL5"/>
<dbReference type="OpenTargets" id="ENSG00000189195"/>
<dbReference type="PharmGKB" id="PA134916444"/>
<dbReference type="PharmGKB" id="PA142671620"/>
<dbReference type="VEuPathDB" id="HostDB:ENSG00000189195"/>
<dbReference type="eggNOG" id="ENOG502QUK4">
    <property type="taxonomic scope" value="Eukaryota"/>
</dbReference>
<dbReference type="eggNOG" id="ENOG502S0TN">
    <property type="taxonomic scope" value="Eukaryota"/>
</dbReference>
<dbReference type="GeneTree" id="ENSGT00940000154382"/>
<dbReference type="HOGENOM" id="CLU_062039_0_0_1"/>
<dbReference type="InParanoid" id="Q5XKL5"/>
<dbReference type="OMA" id="CIPERAN"/>
<dbReference type="OrthoDB" id="409642at2759"/>
<dbReference type="PAN-GO" id="Q5XKL5">
    <property type="GO annotations" value="0 GO annotations based on evolutionary models"/>
</dbReference>
<dbReference type="PhylomeDB" id="Q5XKL5"/>
<dbReference type="TreeFam" id="TF330633"/>
<dbReference type="PathwayCommons" id="Q5XKL5"/>
<dbReference type="SignaLink" id="Q5XKL5"/>
<dbReference type="BioGRID-ORCS" id="23285">
    <property type="hits" value="17 hits in 1144 CRISPR screens"/>
</dbReference>
<dbReference type="BioGRID-ORCS" id="284697">
    <property type="hits" value="16 hits in 1182 CRISPR screens"/>
</dbReference>
<dbReference type="CD-CODE" id="8C2F96ED">
    <property type="entry name" value="Centrosome"/>
</dbReference>
<dbReference type="ChiTaRS" id="BTBD8">
    <property type="organism name" value="human"/>
</dbReference>
<dbReference type="GenomeRNAi" id="284697"/>
<dbReference type="Pharos" id="Q5XKL5">
    <property type="development level" value="Tdark"/>
</dbReference>
<dbReference type="PRO" id="PR:Q5XKL5"/>
<dbReference type="Proteomes" id="UP000005640">
    <property type="component" value="Chromosome 1"/>
</dbReference>
<dbReference type="RNAct" id="Q5XKL5">
    <property type="molecule type" value="protein"/>
</dbReference>
<dbReference type="Bgee" id="ENSG00000189195">
    <property type="expression patterns" value="Expressed in Brodmann (1909) area 23 and 156 other cell types or tissues"/>
</dbReference>
<dbReference type="ExpressionAtlas" id="Q5XKL5">
    <property type="expression patterns" value="baseline and differential"/>
</dbReference>
<dbReference type="GO" id="GO:0030122">
    <property type="term" value="C:AP-2 adaptor complex"/>
    <property type="evidence" value="ECO:0007669"/>
    <property type="project" value="Ensembl"/>
</dbReference>
<dbReference type="GO" id="GO:0030424">
    <property type="term" value="C:axon"/>
    <property type="evidence" value="ECO:0007669"/>
    <property type="project" value="UniProtKB-SubCell"/>
</dbReference>
<dbReference type="GO" id="GO:0098850">
    <property type="term" value="C:extrinsic component of synaptic vesicle membrane"/>
    <property type="evidence" value="ECO:0007669"/>
    <property type="project" value="Ensembl"/>
</dbReference>
<dbReference type="GO" id="GO:0044306">
    <property type="term" value="C:neuron projection terminus"/>
    <property type="evidence" value="ECO:0007669"/>
    <property type="project" value="Ensembl"/>
</dbReference>
<dbReference type="GO" id="GO:0005654">
    <property type="term" value="C:nucleoplasm"/>
    <property type="evidence" value="ECO:0000314"/>
    <property type="project" value="HPA"/>
</dbReference>
<dbReference type="GO" id="GO:0005634">
    <property type="term" value="C:nucleus"/>
    <property type="evidence" value="ECO:0000314"/>
    <property type="project" value="UniProtKB"/>
</dbReference>
<dbReference type="GO" id="GO:0016182">
    <property type="term" value="P:synaptic vesicle budding from endosome"/>
    <property type="evidence" value="ECO:0007669"/>
    <property type="project" value="Ensembl"/>
</dbReference>
<dbReference type="GO" id="GO:0048488">
    <property type="term" value="P:synaptic vesicle endocytosis"/>
    <property type="evidence" value="ECO:0007669"/>
    <property type="project" value="Ensembl"/>
</dbReference>
<dbReference type="CDD" id="cd18490">
    <property type="entry name" value="BACK_BTBD8"/>
    <property type="match status" value="1"/>
</dbReference>
<dbReference type="CDD" id="cd18285">
    <property type="entry name" value="BTB1_POZ_BTBD8"/>
    <property type="match status" value="1"/>
</dbReference>
<dbReference type="CDD" id="cd18286">
    <property type="entry name" value="BTB2_POZ_BTBD8"/>
    <property type="match status" value="1"/>
</dbReference>
<dbReference type="FunFam" id="3.30.710.10:FF:000129">
    <property type="entry name" value="BTB/POZ domain-containing protein 8"/>
    <property type="match status" value="1"/>
</dbReference>
<dbReference type="FunFam" id="3.30.710.10:FF:000166">
    <property type="entry name" value="BTB/POZ domain-containing protein 8"/>
    <property type="match status" value="1"/>
</dbReference>
<dbReference type="Gene3D" id="3.30.710.10">
    <property type="entry name" value="Potassium Channel Kv1.1, Chain A"/>
    <property type="match status" value="2"/>
</dbReference>
<dbReference type="InterPro" id="IPR043225">
    <property type="entry name" value="BACK_BTBD8"/>
</dbReference>
<dbReference type="InterPro" id="IPR000210">
    <property type="entry name" value="BTB/POZ_dom"/>
</dbReference>
<dbReference type="InterPro" id="IPR040121">
    <property type="entry name" value="BTBD8_BTB_POZ_1"/>
</dbReference>
<dbReference type="InterPro" id="IPR027907">
    <property type="entry name" value="BTBD8_C"/>
</dbReference>
<dbReference type="InterPro" id="IPR011333">
    <property type="entry name" value="SKP1/BTB/POZ_sf"/>
</dbReference>
<dbReference type="PANTHER" id="PTHR22427:SF2">
    <property type="entry name" value="BTB_POZ DOMAIN-CONTAINING PROTEIN 8"/>
    <property type="match status" value="1"/>
</dbReference>
<dbReference type="PANTHER" id="PTHR22427">
    <property type="entry name" value="GH15728P"/>
    <property type="match status" value="1"/>
</dbReference>
<dbReference type="Pfam" id="PF00651">
    <property type="entry name" value="BTB"/>
    <property type="match status" value="2"/>
</dbReference>
<dbReference type="Pfam" id="PF15363">
    <property type="entry name" value="BTBD8_C"/>
    <property type="match status" value="1"/>
</dbReference>
<dbReference type="SMART" id="SM00225">
    <property type="entry name" value="BTB"/>
    <property type="match status" value="2"/>
</dbReference>
<dbReference type="SUPFAM" id="SSF54695">
    <property type="entry name" value="POZ domain"/>
    <property type="match status" value="2"/>
</dbReference>
<dbReference type="PROSITE" id="PS50097">
    <property type="entry name" value="BTB"/>
    <property type="match status" value="2"/>
</dbReference>